<comment type="function">
    <text evidence="3">Choline/H+ antiporter, mainly in mitochodria. Also acts as a low-affinity ethanolamine/H+ antiporter, regulating the supply of extracellular ethanolamine (Etn) for the CDP-Etn pathway, redistribute intracellular Etn and balance the CDP-Cho and CDP-Etn arms of the Kennedy pathway.</text>
</comment>
<comment type="catalytic activity">
    <reaction evidence="3">
        <text>choline(out) + n H(+)(in) = choline(in) + n H(+)(out)</text>
        <dbReference type="Rhea" id="RHEA:75463"/>
        <dbReference type="ChEBI" id="CHEBI:15354"/>
        <dbReference type="ChEBI" id="CHEBI:15378"/>
    </reaction>
</comment>
<comment type="catalytic activity">
    <reaction evidence="3">
        <text>ethanolamine(out) + n H(+)(in) = ethanolamine(in) + n H(+)(out)</text>
        <dbReference type="Rhea" id="RHEA:75467"/>
        <dbReference type="ChEBI" id="CHEBI:15378"/>
        <dbReference type="ChEBI" id="CHEBI:57603"/>
    </reaction>
</comment>
<comment type="subunit">
    <text evidence="3">Interacts with COCH.</text>
</comment>
<comment type="subcellular location">
    <subcellularLocation>
        <location evidence="3">Cell membrane</location>
        <topology evidence="4">Multi-pass membrane protein</topology>
    </subcellularLocation>
    <subcellularLocation>
        <location evidence="3">Mitochondrion outer membrane</location>
        <topology evidence="4">Multi-pass membrane protein</topology>
    </subcellularLocation>
    <text evidence="2">Mainly expressed in mitochondria.</text>
</comment>
<comment type="PTM">
    <text evidence="1">N-glycosylated.</text>
</comment>
<comment type="similarity">
    <text evidence="5">Belongs to the CTL (choline transporter-like) family.</text>
</comment>
<name>CTL2_BOVIN</name>
<dbReference type="EMBL" id="BC140554">
    <property type="protein sequence ID" value="AAI40555.1"/>
    <property type="molecule type" value="mRNA"/>
</dbReference>
<dbReference type="RefSeq" id="NP_001091608.1">
    <property type="nucleotide sequence ID" value="NM_001098139.1"/>
</dbReference>
<dbReference type="SMR" id="A5D7H3"/>
<dbReference type="FunCoup" id="A5D7H3">
    <property type="interactions" value="1806"/>
</dbReference>
<dbReference type="STRING" id="9913.ENSBTAP00000067400"/>
<dbReference type="GlyCosmos" id="A5D7H3">
    <property type="glycosylation" value="4 sites, No reported glycans"/>
</dbReference>
<dbReference type="GlyGen" id="A5D7H3">
    <property type="glycosylation" value="4 sites"/>
</dbReference>
<dbReference type="PaxDb" id="9913-ENSBTAP00000003403"/>
<dbReference type="GeneID" id="617624"/>
<dbReference type="KEGG" id="bta:617624"/>
<dbReference type="CTD" id="57153"/>
<dbReference type="VEuPathDB" id="HostDB:ENSBTAG00000002628"/>
<dbReference type="eggNOG" id="KOG1362">
    <property type="taxonomic scope" value="Eukaryota"/>
</dbReference>
<dbReference type="HOGENOM" id="CLU_017181_3_1_1"/>
<dbReference type="InParanoid" id="A5D7H3"/>
<dbReference type="OrthoDB" id="420519at2759"/>
<dbReference type="TreeFam" id="TF313325"/>
<dbReference type="Reactome" id="R-BTA-1483191">
    <property type="pathway name" value="Synthesis of PC"/>
</dbReference>
<dbReference type="Reactome" id="R-BTA-425366">
    <property type="pathway name" value="Transport of bile salts and organic acids, metal ions and amine compounds"/>
</dbReference>
<dbReference type="Reactome" id="R-BTA-6798695">
    <property type="pathway name" value="Neutrophil degranulation"/>
</dbReference>
<dbReference type="Proteomes" id="UP000009136">
    <property type="component" value="Chromosome 7"/>
</dbReference>
<dbReference type="Bgee" id="ENSBTAG00000002628">
    <property type="expression patterns" value="Expressed in lung and 105 other cell types or tissues"/>
</dbReference>
<dbReference type="GO" id="GO:0016020">
    <property type="term" value="C:membrane"/>
    <property type="evidence" value="ECO:0000318"/>
    <property type="project" value="GO_Central"/>
</dbReference>
<dbReference type="GO" id="GO:0005741">
    <property type="term" value="C:mitochondrial outer membrane"/>
    <property type="evidence" value="ECO:0000250"/>
    <property type="project" value="UniProtKB"/>
</dbReference>
<dbReference type="GO" id="GO:0005886">
    <property type="term" value="C:plasma membrane"/>
    <property type="evidence" value="ECO:0000250"/>
    <property type="project" value="UniProtKB"/>
</dbReference>
<dbReference type="GO" id="GO:0015297">
    <property type="term" value="F:antiporter activity"/>
    <property type="evidence" value="ECO:0007669"/>
    <property type="project" value="UniProtKB-KW"/>
</dbReference>
<dbReference type="GO" id="GO:0015220">
    <property type="term" value="F:choline transmembrane transporter activity"/>
    <property type="evidence" value="ECO:0000250"/>
    <property type="project" value="UniProtKB"/>
</dbReference>
<dbReference type="GO" id="GO:0034228">
    <property type="term" value="F:ethanolamine transmembrane transporter activity"/>
    <property type="evidence" value="ECO:0000250"/>
    <property type="project" value="UniProtKB"/>
</dbReference>
<dbReference type="GO" id="GO:0022857">
    <property type="term" value="F:transmembrane transporter activity"/>
    <property type="evidence" value="ECO:0000318"/>
    <property type="project" value="GO_Central"/>
</dbReference>
<dbReference type="GO" id="GO:0015871">
    <property type="term" value="P:choline transport"/>
    <property type="evidence" value="ECO:0000250"/>
    <property type="project" value="UniProtKB"/>
</dbReference>
<dbReference type="GO" id="GO:0034229">
    <property type="term" value="P:ethanolamine transport"/>
    <property type="evidence" value="ECO:0000250"/>
    <property type="project" value="UniProtKB"/>
</dbReference>
<dbReference type="GO" id="GO:0055085">
    <property type="term" value="P:transmembrane transport"/>
    <property type="evidence" value="ECO:0000318"/>
    <property type="project" value="GO_Central"/>
</dbReference>
<dbReference type="InterPro" id="IPR007603">
    <property type="entry name" value="Choline_transptr-like"/>
</dbReference>
<dbReference type="PANTHER" id="PTHR12385">
    <property type="entry name" value="CHOLINE TRANSPORTER-LIKE (SLC FAMILY 44)"/>
    <property type="match status" value="1"/>
</dbReference>
<dbReference type="PANTHER" id="PTHR12385:SF34">
    <property type="entry name" value="CHOLINE TRANSPORTER-LIKE PROTEIN 2"/>
    <property type="match status" value="1"/>
</dbReference>
<dbReference type="Pfam" id="PF04515">
    <property type="entry name" value="Choline_transpo"/>
    <property type="match status" value="1"/>
</dbReference>
<proteinExistence type="evidence at transcript level"/>
<accession>A5D7H3</accession>
<keyword id="KW-0050">Antiport</keyword>
<keyword id="KW-1003">Cell membrane</keyword>
<keyword id="KW-0325">Glycoprotein</keyword>
<keyword id="KW-0472">Membrane</keyword>
<keyword id="KW-0496">Mitochondrion</keyword>
<keyword id="KW-1000">Mitochondrion outer membrane</keyword>
<keyword id="KW-0597">Phosphoprotein</keyword>
<keyword id="KW-1185">Reference proteome</keyword>
<keyword id="KW-0812">Transmembrane</keyword>
<keyword id="KW-1133">Transmembrane helix</keyword>
<keyword id="KW-0813">Transport</keyword>
<feature type="chain" id="PRO_0000327934" description="Choline transporter-like protein 2">
    <location>
        <begin position="1"/>
        <end position="706"/>
    </location>
</feature>
<feature type="topological domain" description="Cytoplasmic" evidence="4">
    <location>
        <begin position="1"/>
        <end position="33"/>
    </location>
</feature>
<feature type="transmembrane region" description="Helical" evidence="4">
    <location>
        <begin position="34"/>
        <end position="54"/>
    </location>
</feature>
<feature type="topological domain" description="Extracellular" evidence="4">
    <location>
        <begin position="55"/>
        <end position="232"/>
    </location>
</feature>
<feature type="transmembrane region" description="Helical" evidence="4">
    <location>
        <begin position="233"/>
        <end position="253"/>
    </location>
</feature>
<feature type="topological domain" description="Cytoplasmic" evidence="4">
    <location>
        <begin position="254"/>
        <end position="256"/>
    </location>
</feature>
<feature type="transmembrane region" description="Helical" evidence="4">
    <location>
        <begin position="257"/>
        <end position="277"/>
    </location>
</feature>
<feature type="topological domain" description="Extracellular" evidence="4">
    <location>
        <begin position="278"/>
        <end position="315"/>
    </location>
</feature>
<feature type="transmembrane region" description="Helical" evidence="4">
    <location>
        <begin position="316"/>
        <end position="336"/>
    </location>
</feature>
<feature type="topological domain" description="Cytoplasmic" evidence="4">
    <location>
        <begin position="337"/>
        <end position="364"/>
    </location>
</feature>
<feature type="transmembrane region" description="Helical" evidence="4">
    <location>
        <begin position="365"/>
        <end position="385"/>
    </location>
</feature>
<feature type="topological domain" description="Extracellular" evidence="4">
    <location>
        <begin position="386"/>
        <end position="457"/>
    </location>
</feature>
<feature type="transmembrane region" description="Helical" evidence="4">
    <location>
        <begin position="458"/>
        <end position="480"/>
    </location>
</feature>
<feature type="topological domain" description="Cytoplasmic" evidence="4">
    <location>
        <begin position="481"/>
        <end position="504"/>
    </location>
</feature>
<feature type="transmembrane region" description="Helical" evidence="4">
    <location>
        <begin position="505"/>
        <end position="525"/>
    </location>
</feature>
<feature type="topological domain" description="Extracellular" evidence="4">
    <location>
        <begin position="526"/>
        <end position="563"/>
    </location>
</feature>
<feature type="transmembrane region" description="Helical" evidence="4">
    <location>
        <begin position="564"/>
        <end position="584"/>
    </location>
</feature>
<feature type="topological domain" description="Cytoplasmic" evidence="4">
    <location>
        <begin position="585"/>
        <end position="599"/>
    </location>
</feature>
<feature type="transmembrane region" description="Helical" evidence="4">
    <location>
        <begin position="600"/>
        <end position="620"/>
    </location>
</feature>
<feature type="topological domain" description="Extracellular" evidence="4">
    <location>
        <begin position="621"/>
        <end position="638"/>
    </location>
</feature>
<feature type="transmembrane region" description="Helical" evidence="4">
    <location>
        <begin position="639"/>
        <end position="659"/>
    </location>
</feature>
<feature type="topological domain" description="Cytoplasmic" evidence="4">
    <location>
        <begin position="660"/>
        <end position="706"/>
    </location>
</feature>
<feature type="modified residue" description="Phosphothreonine" evidence="3">
    <location>
        <position position="14"/>
    </location>
</feature>
<feature type="glycosylation site" description="N-linked (GlcNAc...) asparagine" evidence="4">
    <location>
        <position position="187"/>
    </location>
</feature>
<feature type="glycosylation site" description="N-linked (GlcNAc...) asparagine" evidence="4">
    <location>
        <position position="200"/>
    </location>
</feature>
<feature type="glycosylation site" description="N-linked (GlcNAc...) asparagine" evidence="4">
    <location>
        <position position="397"/>
    </location>
</feature>
<feature type="glycosylation site" description="N-linked (GlcNAc...) asparagine" evidence="4">
    <location>
        <position position="417"/>
    </location>
</feature>
<evidence type="ECO:0000250" key="1"/>
<evidence type="ECO:0000250" key="2">
    <source>
        <dbReference type="UniProtKB" id="B4F795"/>
    </source>
</evidence>
<evidence type="ECO:0000250" key="3">
    <source>
        <dbReference type="UniProtKB" id="Q8IWA5"/>
    </source>
</evidence>
<evidence type="ECO:0000255" key="4"/>
<evidence type="ECO:0000305" key="5"/>
<reference key="1">
    <citation type="submission" date="2007-04" db="EMBL/GenBank/DDBJ databases">
        <authorList>
            <consortium name="NIH - Mammalian Gene Collection (MGC) project"/>
        </authorList>
    </citation>
    <scope>NUCLEOTIDE SEQUENCE [LARGE SCALE MRNA]</scope>
    <source>
        <strain>Hereford</strain>
        <tissue>Fetal skin</tissue>
    </source>
</reference>
<sequence>MGKEQQLYYGKHGTPQKYDPAFRGPIYNRGCTDIICCVFLFLAIVGYVAVGIIAWTHGDPRKVIYPTDSRGQFCGQKGTKNENKPFLFYFNIVKCASPLVLLEFQCPTPQICVEKCPSRYLTYLNAHASEDFEYYKQYCLPGFQKNKGVAEVLRDGDCPAVLIPSKPFAQRCFPAVHAHKGILMVGNETTYEDGLGSRKNITELVEGAKKASGILEARQLAMRIFEDYTVSWYWIIIGLIIAMVLSLLFIILLRFLAGIMVWVMIVMVILVLGYGILHCYMEYARLRGEAGSDVSLVDLGFQTDFRVYLHLRQTWVAFMIILSIVEVIIILLLIFLRKRILIAIALIKEASRAVGYVMCSLLYPLVTFFLLCLCIAYWASTAIFLSTSNEAVYKIFNETSCPVAGKTCNPETFPSSNESRLCPGAHCQFAFYGGESTYHRALLGLQIFNVFMFFWLANFVLALGQVTLAGAFASYYWAMNKPDDLPAFPLFSAFGRALRYHTGSLAFGSLLLAIVQVIRVILEYLDQRLKAAENKFAKFLMSCLKCCFWCLEKFIKFLNRNAYIMIAIYGTNFCTSARNAFFLLMRNIIRVAVLDKVTDFLFLLGKLLIVGSVGILAFFFFTHRIRIVQDTAPSLNYYWVPVVTVVIGSYLIAHGFFSVYGMCVDTLFLCFLEDLERNDGTPERPYFMSLTLKKILNKTNKRQAEA</sequence>
<protein>
    <recommendedName>
        <fullName>Choline transporter-like protein 2</fullName>
    </recommendedName>
    <alternativeName>
        <fullName>Solute carrier family 44 member 2</fullName>
    </alternativeName>
</protein>
<gene>
    <name type="primary">SLC44A2</name>
    <name type="synonym">CTL2</name>
</gene>
<organism>
    <name type="scientific">Bos taurus</name>
    <name type="common">Bovine</name>
    <dbReference type="NCBI Taxonomy" id="9913"/>
    <lineage>
        <taxon>Eukaryota</taxon>
        <taxon>Metazoa</taxon>
        <taxon>Chordata</taxon>
        <taxon>Craniata</taxon>
        <taxon>Vertebrata</taxon>
        <taxon>Euteleostomi</taxon>
        <taxon>Mammalia</taxon>
        <taxon>Eutheria</taxon>
        <taxon>Laurasiatheria</taxon>
        <taxon>Artiodactyla</taxon>
        <taxon>Ruminantia</taxon>
        <taxon>Pecora</taxon>
        <taxon>Bovidae</taxon>
        <taxon>Bovinae</taxon>
        <taxon>Bos</taxon>
    </lineage>
</organism>